<organism>
    <name type="scientific">Escherichia coli O9:H4 (strain HS)</name>
    <dbReference type="NCBI Taxonomy" id="331112"/>
    <lineage>
        <taxon>Bacteria</taxon>
        <taxon>Pseudomonadati</taxon>
        <taxon>Pseudomonadota</taxon>
        <taxon>Gammaproteobacteria</taxon>
        <taxon>Enterobacterales</taxon>
        <taxon>Enterobacteriaceae</taxon>
        <taxon>Escherichia</taxon>
    </lineage>
</organism>
<dbReference type="EC" id="5.1.1.7" evidence="1"/>
<dbReference type="EMBL" id="CP000802">
    <property type="protein sequence ID" value="ABV08221.1"/>
    <property type="molecule type" value="Genomic_DNA"/>
</dbReference>
<dbReference type="RefSeq" id="WP_001160654.1">
    <property type="nucleotide sequence ID" value="NC_009800.1"/>
</dbReference>
<dbReference type="SMR" id="A8A6R7"/>
<dbReference type="GeneID" id="93778134"/>
<dbReference type="KEGG" id="ecx:EcHS_A4034"/>
<dbReference type="HOGENOM" id="CLU_053306_1_1_6"/>
<dbReference type="UniPathway" id="UPA00034">
    <property type="reaction ID" value="UER00025"/>
</dbReference>
<dbReference type="GO" id="GO:0005829">
    <property type="term" value="C:cytosol"/>
    <property type="evidence" value="ECO:0007669"/>
    <property type="project" value="TreeGrafter"/>
</dbReference>
<dbReference type="GO" id="GO:0008837">
    <property type="term" value="F:diaminopimelate epimerase activity"/>
    <property type="evidence" value="ECO:0007669"/>
    <property type="project" value="UniProtKB-UniRule"/>
</dbReference>
<dbReference type="GO" id="GO:0009089">
    <property type="term" value="P:lysine biosynthetic process via diaminopimelate"/>
    <property type="evidence" value="ECO:0007669"/>
    <property type="project" value="UniProtKB-UniRule"/>
</dbReference>
<dbReference type="FunFam" id="3.10.310.10:FF:000001">
    <property type="entry name" value="Diaminopimelate epimerase"/>
    <property type="match status" value="1"/>
</dbReference>
<dbReference type="FunFam" id="3.10.310.10:FF:000002">
    <property type="entry name" value="Diaminopimelate epimerase"/>
    <property type="match status" value="1"/>
</dbReference>
<dbReference type="Gene3D" id="3.10.310.10">
    <property type="entry name" value="Diaminopimelate Epimerase, Chain A, domain 1"/>
    <property type="match status" value="2"/>
</dbReference>
<dbReference type="HAMAP" id="MF_00197">
    <property type="entry name" value="DAP_epimerase"/>
    <property type="match status" value="1"/>
</dbReference>
<dbReference type="InterPro" id="IPR018510">
    <property type="entry name" value="DAP_epimerase_AS"/>
</dbReference>
<dbReference type="InterPro" id="IPR001653">
    <property type="entry name" value="DAP_epimerase_DapF"/>
</dbReference>
<dbReference type="NCBIfam" id="TIGR00652">
    <property type="entry name" value="DapF"/>
    <property type="match status" value="1"/>
</dbReference>
<dbReference type="PANTHER" id="PTHR31689:SF0">
    <property type="entry name" value="DIAMINOPIMELATE EPIMERASE"/>
    <property type="match status" value="1"/>
</dbReference>
<dbReference type="PANTHER" id="PTHR31689">
    <property type="entry name" value="DIAMINOPIMELATE EPIMERASE, CHLOROPLASTIC"/>
    <property type="match status" value="1"/>
</dbReference>
<dbReference type="Pfam" id="PF01678">
    <property type="entry name" value="DAP_epimerase"/>
    <property type="match status" value="2"/>
</dbReference>
<dbReference type="SUPFAM" id="SSF54506">
    <property type="entry name" value="Diaminopimelate epimerase-like"/>
    <property type="match status" value="1"/>
</dbReference>
<dbReference type="PROSITE" id="PS01326">
    <property type="entry name" value="DAP_EPIMERASE"/>
    <property type="match status" value="1"/>
</dbReference>
<sequence>MQFSKMHGLGNDFMVVDAVTQNVFFSPELIRRLADRHLGVGFDQLLVVEPPYDPELDFHYRIFNADGSEVAQCGNGARCFARFVRLKGLTNKRDIRVSTANGRMVLTVTDDDLVRVNMGEPNFEPSAVPFRANKAEKTYIMRAAEQTILCGVVSMGNPHCVIQVDDVDTAAVETLGPVLESHERFPERANIGFMQVVKREHIRLRVYERGAGETQACGSGACAAVAVGIQQGLLAEEVRVELPGGRLDIAWKGPGHPLYMTGPAVHVYDGFIHL</sequence>
<name>DAPF_ECOHS</name>
<gene>
    <name evidence="1" type="primary">dapF</name>
    <name type="ordered locus">EcHS_A4034</name>
</gene>
<proteinExistence type="inferred from homology"/>
<evidence type="ECO:0000255" key="1">
    <source>
        <dbReference type="HAMAP-Rule" id="MF_00197"/>
    </source>
</evidence>
<accession>A8A6R7</accession>
<protein>
    <recommendedName>
        <fullName evidence="1">Diaminopimelate epimerase</fullName>
        <shortName evidence="1">DAP epimerase</shortName>
        <ecNumber evidence="1">5.1.1.7</ecNumber>
    </recommendedName>
    <alternativeName>
        <fullName evidence="1">PLP-independent amino acid racemase</fullName>
    </alternativeName>
</protein>
<reference key="1">
    <citation type="journal article" date="2008" name="J. Bacteriol.">
        <title>The pangenome structure of Escherichia coli: comparative genomic analysis of E. coli commensal and pathogenic isolates.</title>
        <authorList>
            <person name="Rasko D.A."/>
            <person name="Rosovitz M.J."/>
            <person name="Myers G.S.A."/>
            <person name="Mongodin E.F."/>
            <person name="Fricke W.F."/>
            <person name="Gajer P."/>
            <person name="Crabtree J."/>
            <person name="Sebaihia M."/>
            <person name="Thomson N.R."/>
            <person name="Chaudhuri R."/>
            <person name="Henderson I.R."/>
            <person name="Sperandio V."/>
            <person name="Ravel J."/>
        </authorList>
    </citation>
    <scope>NUCLEOTIDE SEQUENCE [LARGE SCALE GENOMIC DNA]</scope>
    <source>
        <strain>HS</strain>
    </source>
</reference>
<feature type="chain" id="PRO_1000058542" description="Diaminopimelate epimerase">
    <location>
        <begin position="1"/>
        <end position="274"/>
    </location>
</feature>
<feature type="active site" description="Proton donor" evidence="1">
    <location>
        <position position="73"/>
    </location>
</feature>
<feature type="active site" description="Proton acceptor" evidence="1">
    <location>
        <position position="217"/>
    </location>
</feature>
<feature type="binding site" evidence="1">
    <location>
        <position position="11"/>
    </location>
    <ligand>
        <name>substrate</name>
    </ligand>
</feature>
<feature type="binding site" evidence="1">
    <location>
        <position position="44"/>
    </location>
    <ligand>
        <name>substrate</name>
    </ligand>
</feature>
<feature type="binding site" evidence="1">
    <location>
        <position position="64"/>
    </location>
    <ligand>
        <name>substrate</name>
    </ligand>
</feature>
<feature type="binding site" evidence="1">
    <location>
        <begin position="74"/>
        <end position="75"/>
    </location>
    <ligand>
        <name>substrate</name>
    </ligand>
</feature>
<feature type="binding site" evidence="1">
    <location>
        <position position="157"/>
    </location>
    <ligand>
        <name>substrate</name>
    </ligand>
</feature>
<feature type="binding site" evidence="1">
    <location>
        <position position="190"/>
    </location>
    <ligand>
        <name>substrate</name>
    </ligand>
</feature>
<feature type="binding site" evidence="1">
    <location>
        <begin position="208"/>
        <end position="209"/>
    </location>
    <ligand>
        <name>substrate</name>
    </ligand>
</feature>
<feature type="binding site" evidence="1">
    <location>
        <begin position="218"/>
        <end position="219"/>
    </location>
    <ligand>
        <name>substrate</name>
    </ligand>
</feature>
<feature type="site" description="Could be important to modulate the pK values of the two catalytic cysteine residues" evidence="1">
    <location>
        <position position="159"/>
    </location>
</feature>
<feature type="site" description="Could be important to modulate the pK values of the two catalytic cysteine residues" evidence="1">
    <location>
        <position position="208"/>
    </location>
</feature>
<feature type="site" description="Important for dimerization" evidence="1">
    <location>
        <position position="268"/>
    </location>
</feature>
<comment type="function">
    <text evidence="1">Catalyzes the stereoinversion of LL-2,6-diaminopimelate (L,L-DAP) to meso-diaminopimelate (meso-DAP), a precursor of L-lysine and an essential component of the bacterial peptidoglycan.</text>
</comment>
<comment type="catalytic activity">
    <reaction evidence="1">
        <text>(2S,6S)-2,6-diaminopimelate = meso-2,6-diaminopimelate</text>
        <dbReference type="Rhea" id="RHEA:15393"/>
        <dbReference type="ChEBI" id="CHEBI:57609"/>
        <dbReference type="ChEBI" id="CHEBI:57791"/>
        <dbReference type="EC" id="5.1.1.7"/>
    </reaction>
</comment>
<comment type="pathway">
    <text evidence="1">Amino-acid biosynthesis; L-lysine biosynthesis via DAP pathway; DL-2,6-diaminopimelate from LL-2,6-diaminopimelate: step 1/1.</text>
</comment>
<comment type="subunit">
    <text evidence="1">Homodimer.</text>
</comment>
<comment type="subcellular location">
    <subcellularLocation>
        <location evidence="1">Cytoplasm</location>
    </subcellularLocation>
</comment>
<comment type="similarity">
    <text evidence="1">Belongs to the diaminopimelate epimerase family.</text>
</comment>
<keyword id="KW-0028">Amino-acid biosynthesis</keyword>
<keyword id="KW-0963">Cytoplasm</keyword>
<keyword id="KW-0413">Isomerase</keyword>
<keyword id="KW-0457">Lysine biosynthesis</keyword>